<dbReference type="EMBL" id="AY988052">
    <property type="protein sequence ID" value="AAY44259.1"/>
    <property type="molecule type" value="Genomic_DNA"/>
</dbReference>
<dbReference type="SMR" id="Q1X6Y6"/>
<dbReference type="GlyCosmos" id="Q1X6Y6">
    <property type="glycosylation" value="1 site, No reported glycans"/>
</dbReference>
<dbReference type="GO" id="GO:0030424">
    <property type="term" value="C:axon"/>
    <property type="evidence" value="ECO:0007669"/>
    <property type="project" value="TreeGrafter"/>
</dbReference>
<dbReference type="GO" id="GO:0030425">
    <property type="term" value="C:dendrite"/>
    <property type="evidence" value="ECO:0007669"/>
    <property type="project" value="TreeGrafter"/>
</dbReference>
<dbReference type="GO" id="GO:0005615">
    <property type="term" value="C:extracellular space"/>
    <property type="evidence" value="ECO:0007669"/>
    <property type="project" value="TreeGrafter"/>
</dbReference>
<dbReference type="GO" id="GO:0008021">
    <property type="term" value="C:synaptic vesicle"/>
    <property type="evidence" value="ECO:0007669"/>
    <property type="project" value="TreeGrafter"/>
</dbReference>
<dbReference type="GO" id="GO:0008083">
    <property type="term" value="F:growth factor activity"/>
    <property type="evidence" value="ECO:0007669"/>
    <property type="project" value="UniProtKB-KW"/>
</dbReference>
<dbReference type="GO" id="GO:0005163">
    <property type="term" value="F:nerve growth factor receptor binding"/>
    <property type="evidence" value="ECO:0007669"/>
    <property type="project" value="TreeGrafter"/>
</dbReference>
<dbReference type="GO" id="GO:0007169">
    <property type="term" value="P:cell surface receptor protein tyrosine kinase signaling pathway"/>
    <property type="evidence" value="ECO:0007669"/>
    <property type="project" value="TreeGrafter"/>
</dbReference>
<dbReference type="GO" id="GO:0050804">
    <property type="term" value="P:modulation of chemical synaptic transmission"/>
    <property type="evidence" value="ECO:0007669"/>
    <property type="project" value="TreeGrafter"/>
</dbReference>
<dbReference type="GO" id="GO:0043524">
    <property type="term" value="P:negative regulation of neuron apoptotic process"/>
    <property type="evidence" value="ECO:0007669"/>
    <property type="project" value="TreeGrafter"/>
</dbReference>
<dbReference type="GO" id="GO:0021675">
    <property type="term" value="P:nerve development"/>
    <property type="evidence" value="ECO:0007669"/>
    <property type="project" value="TreeGrafter"/>
</dbReference>
<dbReference type="GO" id="GO:0038180">
    <property type="term" value="P:nerve growth factor signaling pathway"/>
    <property type="evidence" value="ECO:0007669"/>
    <property type="project" value="TreeGrafter"/>
</dbReference>
<dbReference type="GO" id="GO:0048812">
    <property type="term" value="P:neuron projection morphogenesis"/>
    <property type="evidence" value="ECO:0007669"/>
    <property type="project" value="TreeGrafter"/>
</dbReference>
<dbReference type="Gene3D" id="2.10.90.10">
    <property type="entry name" value="Cystine-knot cytokines"/>
    <property type="match status" value="1"/>
</dbReference>
<dbReference type="InterPro" id="IPR029034">
    <property type="entry name" value="Cystine-knot_cytokine"/>
</dbReference>
<dbReference type="InterPro" id="IPR020408">
    <property type="entry name" value="Nerve_growth_factor-like"/>
</dbReference>
<dbReference type="InterPro" id="IPR002072">
    <property type="entry name" value="Nerve_growth_factor-rel"/>
</dbReference>
<dbReference type="InterPro" id="IPR045815">
    <property type="entry name" value="NTF3_N"/>
</dbReference>
<dbReference type="PANTHER" id="PTHR11589">
    <property type="entry name" value="NERVE GROWTH FACTOR NGF -RELATED"/>
    <property type="match status" value="1"/>
</dbReference>
<dbReference type="PANTHER" id="PTHR11589:SF4">
    <property type="entry name" value="NEUROTROPHIN-3"/>
    <property type="match status" value="1"/>
</dbReference>
<dbReference type="Pfam" id="PF00243">
    <property type="entry name" value="NGF"/>
    <property type="match status" value="1"/>
</dbReference>
<dbReference type="Pfam" id="PF19338">
    <property type="entry name" value="NTF3_N"/>
    <property type="match status" value="1"/>
</dbReference>
<dbReference type="PIRSF" id="PIRSF001789">
    <property type="entry name" value="NGF"/>
    <property type="match status" value="1"/>
</dbReference>
<dbReference type="SMART" id="SM00140">
    <property type="entry name" value="NGF"/>
    <property type="match status" value="1"/>
</dbReference>
<dbReference type="SUPFAM" id="SSF57501">
    <property type="entry name" value="Cystine-knot cytokines"/>
    <property type="match status" value="1"/>
</dbReference>
<dbReference type="PROSITE" id="PS50270">
    <property type="entry name" value="NGF_2"/>
    <property type="match status" value="1"/>
</dbReference>
<keyword id="KW-0165">Cleavage on pair of basic residues</keyword>
<keyword id="KW-0325">Glycoprotein</keyword>
<keyword id="KW-0339">Growth factor</keyword>
<keyword id="KW-0964">Secreted</keyword>
<keyword id="KW-0732">Signal</keyword>
<reference key="1">
    <citation type="journal article" date="2006" name="Mol. Phylogenet. Evol.">
        <title>Dispersal and vicariance: the complex evolutionary history of boid snakes.</title>
        <authorList>
            <person name="Noonan B.P."/>
            <person name="Chippindale P.T."/>
        </authorList>
    </citation>
    <scope>NUCLEOTIDE SEQUENCE [GENOMIC DNA]</scope>
</reference>
<comment type="function">
    <text evidence="1">Seems to promote the survival of visceral and proprioceptive sensory neurons.</text>
</comment>
<comment type="subcellular location">
    <subcellularLocation>
        <location evidence="1">Secreted</location>
    </subcellularLocation>
</comment>
<comment type="similarity">
    <text evidence="3">Belongs to the NGF-beta family.</text>
</comment>
<protein>
    <recommendedName>
        <fullName>Neurotrophin-3</fullName>
        <shortName>NT-3</shortName>
    </recommendedName>
</protein>
<proteinExistence type="inferred from homology"/>
<accession>Q1X6Y6</accession>
<evidence type="ECO:0000250" key="1"/>
<evidence type="ECO:0000255" key="2"/>
<evidence type="ECO:0000305" key="3"/>
<name>NTF3_MORSI</name>
<feature type="signal peptide" evidence="2">
    <location>
        <begin position="1" status="less than"/>
        <end position="3"/>
    </location>
</feature>
<feature type="propeptide" id="PRO_0000346741" evidence="1">
    <location>
        <begin position="4"/>
        <end position="119"/>
    </location>
</feature>
<feature type="chain" id="PRO_0000346742" description="Neurotrophin-3">
    <location>
        <begin position="120"/>
        <end position="165" status="greater than"/>
    </location>
</feature>
<feature type="glycosylation site" description="N-linked (GlcNAc...) asparagine" evidence="2">
    <location>
        <position position="112"/>
    </location>
</feature>
<feature type="non-terminal residue">
    <location>
        <position position="1"/>
    </location>
</feature>
<feature type="non-terminal residue">
    <location>
        <position position="165"/>
    </location>
</feature>
<sequence length="165" mass="18318">IQSTSMDQGSLSEDSMNSFIRTLIQAGIWKNKVPKQTARTKDGMQTTVKEAEAEPGAVANKGVRLGSQPVVSVDTELLRQQRRFSSPRVLLSENAPLEPPPLYLMEEPMVLNQTSRRKRFAEGKSHRGEYSVCDSESRWVTDKSSAVDIRGHQVTVLGEIRMGSS</sequence>
<organism>
    <name type="scientific">Morelia spilota</name>
    <name type="common">Carpet python</name>
    <dbReference type="NCBI Taxonomy" id="51896"/>
    <lineage>
        <taxon>Eukaryota</taxon>
        <taxon>Metazoa</taxon>
        <taxon>Chordata</taxon>
        <taxon>Craniata</taxon>
        <taxon>Vertebrata</taxon>
        <taxon>Euteleostomi</taxon>
        <taxon>Lepidosauria</taxon>
        <taxon>Squamata</taxon>
        <taxon>Bifurcata</taxon>
        <taxon>Unidentata</taxon>
        <taxon>Episquamata</taxon>
        <taxon>Toxicofera</taxon>
        <taxon>Serpentes</taxon>
        <taxon>Henophidia</taxon>
        <taxon>Pythonidae</taxon>
        <taxon>Morelia</taxon>
    </lineage>
</organism>
<gene>
    <name type="primary">NTF3</name>
</gene>